<reference key="1">
    <citation type="journal article" date="2008" name="Genome Res.">
        <title>Comparative genome analysis of Salmonella enteritidis PT4 and Salmonella gallinarum 287/91 provides insights into evolutionary and host adaptation pathways.</title>
        <authorList>
            <person name="Thomson N.R."/>
            <person name="Clayton D.J."/>
            <person name="Windhorst D."/>
            <person name="Vernikos G."/>
            <person name="Davidson S."/>
            <person name="Churcher C."/>
            <person name="Quail M.A."/>
            <person name="Stevens M."/>
            <person name="Jones M.A."/>
            <person name="Watson M."/>
            <person name="Barron A."/>
            <person name="Layton A."/>
            <person name="Pickard D."/>
            <person name="Kingsley R.A."/>
            <person name="Bignell A."/>
            <person name="Clark L."/>
            <person name="Harris B."/>
            <person name="Ormond D."/>
            <person name="Abdellah Z."/>
            <person name="Brooks K."/>
            <person name="Cherevach I."/>
            <person name="Chillingworth T."/>
            <person name="Woodward J."/>
            <person name="Norberczak H."/>
            <person name="Lord A."/>
            <person name="Arrowsmith C."/>
            <person name="Jagels K."/>
            <person name="Moule S."/>
            <person name="Mungall K."/>
            <person name="Saunders M."/>
            <person name="Whitehead S."/>
            <person name="Chabalgoity J.A."/>
            <person name="Maskell D."/>
            <person name="Humphreys T."/>
            <person name="Roberts M."/>
            <person name="Barrow P.A."/>
            <person name="Dougan G."/>
            <person name="Parkhill J."/>
        </authorList>
    </citation>
    <scope>NUCLEOTIDE SEQUENCE [LARGE SCALE GENOMIC DNA]</scope>
    <source>
        <strain>287/91 / NCTC 13346</strain>
    </source>
</reference>
<sequence length="883" mass="99021">MNEQYSALRSNVSMLGKVLGETIKDALGEHILDRVETIRKLSKSSRAGNEANRQELLTTLQNLSNDELLPVARAFSQFLNLANTAEQYHSISPKGEAASNPEVIARTLRKLKNQPDLNDATIKKAVESLSLELVLTAHPTEITRRTLIHKMGEINNCLKQLDNTDIADYERHQVMRRLRQLIAQSWHTDEIRKQRPSPVDEAKWGFAVVENSLWQGVPNYLRELNEQLEENLGYKLTVDFVPVRFTSWMGGDRDGNPNVTADITRHVLLLSRWKATDLFLKDIHILVSELSMVDATPELLALVGEEGASEPYRYLMKKLRARLMATQSWLEARLKGEKLPKPAGLLTQNEQLWEPLYACYQSLQACGMGIIANGELLDTLRRVKCFGVPLVRIDIRQESTRHTEALGEITRYLGIGDYESWSEADKQAFLIRELNSKRPLLPRNWEPSNDTREVLETCKVIAEAPKGSIAAYVISMAKTPSDVLAVHLLLKEAGIGFAMPVAPLFETLDDLNNADDVMTQLLNIDWYRGLIQGKQMVMIGYSDSAKDAGVMAASWAQYQAQDALIKTCEKAGIELTLFHGRGGSIGRGGAPAHAALLSQPPGSLKGGLRVTEQGEMIRFKYGLPEVTVSSLSLYTSAILEANLLPPPEPKDSWRHIMDELSVISCETYRGYVRENKDFVPYFRSATPEQELGKLPLGSRPAKRRPTGGVESLRAIPWIFAWTQNRLMLPAWLGAGTALQKVVEDGKQSELEAMCRDWPFFSTRLGMLEMVFSKADLWLADYYDQRLVAKTLWPLGKELRDLLEEDIKVVLAIANDSHLMADLPWIAESIQLRNVYTDPLNVLQAELLYRSRLTEEQGKSPDPRVEQALMVTIAGVAAGMRNTG</sequence>
<accession>B5RF49</accession>
<protein>
    <recommendedName>
        <fullName evidence="1">Phosphoenolpyruvate carboxylase</fullName>
        <shortName evidence="1">PEPC</shortName>
        <shortName evidence="1">PEPCase</shortName>
        <ecNumber evidence="1">4.1.1.31</ecNumber>
    </recommendedName>
</protein>
<dbReference type="EC" id="4.1.1.31" evidence="1"/>
<dbReference type="EMBL" id="AM933173">
    <property type="protein sequence ID" value="CAR39092.1"/>
    <property type="molecule type" value="Genomic_DNA"/>
</dbReference>
<dbReference type="RefSeq" id="WP_001005553.1">
    <property type="nucleotide sequence ID" value="NC_011274.1"/>
</dbReference>
<dbReference type="SMR" id="B5RF49"/>
<dbReference type="KEGG" id="seg:SG3296"/>
<dbReference type="HOGENOM" id="CLU_006557_2_0_6"/>
<dbReference type="Proteomes" id="UP000008321">
    <property type="component" value="Chromosome"/>
</dbReference>
<dbReference type="GO" id="GO:0005829">
    <property type="term" value="C:cytosol"/>
    <property type="evidence" value="ECO:0007669"/>
    <property type="project" value="TreeGrafter"/>
</dbReference>
<dbReference type="GO" id="GO:0000287">
    <property type="term" value="F:magnesium ion binding"/>
    <property type="evidence" value="ECO:0007669"/>
    <property type="project" value="UniProtKB-UniRule"/>
</dbReference>
<dbReference type="GO" id="GO:0008964">
    <property type="term" value="F:phosphoenolpyruvate carboxylase activity"/>
    <property type="evidence" value="ECO:0007669"/>
    <property type="project" value="UniProtKB-UniRule"/>
</dbReference>
<dbReference type="GO" id="GO:0015977">
    <property type="term" value="P:carbon fixation"/>
    <property type="evidence" value="ECO:0007669"/>
    <property type="project" value="UniProtKB-UniRule"/>
</dbReference>
<dbReference type="GO" id="GO:0006107">
    <property type="term" value="P:oxaloacetate metabolic process"/>
    <property type="evidence" value="ECO:0007669"/>
    <property type="project" value="UniProtKB-UniRule"/>
</dbReference>
<dbReference type="GO" id="GO:0006099">
    <property type="term" value="P:tricarboxylic acid cycle"/>
    <property type="evidence" value="ECO:0007669"/>
    <property type="project" value="InterPro"/>
</dbReference>
<dbReference type="FunFam" id="1.20.1440.90:FF:000002">
    <property type="entry name" value="Phosphoenolpyruvate carboxylase"/>
    <property type="match status" value="1"/>
</dbReference>
<dbReference type="Gene3D" id="1.20.1440.90">
    <property type="entry name" value="Phosphoenolpyruvate/pyruvate domain"/>
    <property type="match status" value="1"/>
</dbReference>
<dbReference type="HAMAP" id="MF_00595">
    <property type="entry name" value="PEPcase_type1"/>
    <property type="match status" value="1"/>
</dbReference>
<dbReference type="InterPro" id="IPR021135">
    <property type="entry name" value="PEP_COase"/>
</dbReference>
<dbReference type="InterPro" id="IPR022805">
    <property type="entry name" value="PEP_COase_bac/pln-type"/>
</dbReference>
<dbReference type="InterPro" id="IPR018129">
    <property type="entry name" value="PEP_COase_Lys_AS"/>
</dbReference>
<dbReference type="InterPro" id="IPR033129">
    <property type="entry name" value="PEPCASE_His_AS"/>
</dbReference>
<dbReference type="InterPro" id="IPR015813">
    <property type="entry name" value="Pyrv/PenolPyrv_kinase-like_dom"/>
</dbReference>
<dbReference type="NCBIfam" id="NF000584">
    <property type="entry name" value="PRK00009.1"/>
    <property type="match status" value="1"/>
</dbReference>
<dbReference type="PANTHER" id="PTHR30523">
    <property type="entry name" value="PHOSPHOENOLPYRUVATE CARBOXYLASE"/>
    <property type="match status" value="1"/>
</dbReference>
<dbReference type="PANTHER" id="PTHR30523:SF6">
    <property type="entry name" value="PHOSPHOENOLPYRUVATE CARBOXYLASE"/>
    <property type="match status" value="1"/>
</dbReference>
<dbReference type="Pfam" id="PF00311">
    <property type="entry name" value="PEPcase"/>
    <property type="match status" value="1"/>
</dbReference>
<dbReference type="PRINTS" id="PR00150">
    <property type="entry name" value="PEPCARBXLASE"/>
</dbReference>
<dbReference type="SUPFAM" id="SSF51621">
    <property type="entry name" value="Phosphoenolpyruvate/pyruvate domain"/>
    <property type="match status" value="1"/>
</dbReference>
<dbReference type="PROSITE" id="PS00781">
    <property type="entry name" value="PEPCASE_1"/>
    <property type="match status" value="1"/>
</dbReference>
<dbReference type="PROSITE" id="PS00393">
    <property type="entry name" value="PEPCASE_2"/>
    <property type="match status" value="1"/>
</dbReference>
<gene>
    <name evidence="1" type="primary">ppc</name>
    <name type="ordered locus">SG3296</name>
</gene>
<organism>
    <name type="scientific">Salmonella gallinarum (strain 287/91 / NCTC 13346)</name>
    <dbReference type="NCBI Taxonomy" id="550538"/>
    <lineage>
        <taxon>Bacteria</taxon>
        <taxon>Pseudomonadati</taxon>
        <taxon>Pseudomonadota</taxon>
        <taxon>Gammaproteobacteria</taxon>
        <taxon>Enterobacterales</taxon>
        <taxon>Enterobacteriaceae</taxon>
        <taxon>Salmonella</taxon>
    </lineage>
</organism>
<feature type="chain" id="PRO_1000129840" description="Phosphoenolpyruvate carboxylase">
    <location>
        <begin position="1"/>
        <end position="883"/>
    </location>
</feature>
<feature type="active site" evidence="1">
    <location>
        <position position="138"/>
    </location>
</feature>
<feature type="active site" evidence="1">
    <location>
        <position position="546"/>
    </location>
</feature>
<keyword id="KW-0120">Carbon dioxide fixation</keyword>
<keyword id="KW-0456">Lyase</keyword>
<keyword id="KW-0460">Magnesium</keyword>
<evidence type="ECO:0000255" key="1">
    <source>
        <dbReference type="HAMAP-Rule" id="MF_00595"/>
    </source>
</evidence>
<comment type="function">
    <text evidence="1">Forms oxaloacetate, a four-carbon dicarboxylic acid source for the tricarboxylic acid cycle.</text>
</comment>
<comment type="catalytic activity">
    <reaction evidence="1">
        <text>oxaloacetate + phosphate = phosphoenolpyruvate + hydrogencarbonate</text>
        <dbReference type="Rhea" id="RHEA:28370"/>
        <dbReference type="ChEBI" id="CHEBI:16452"/>
        <dbReference type="ChEBI" id="CHEBI:17544"/>
        <dbReference type="ChEBI" id="CHEBI:43474"/>
        <dbReference type="ChEBI" id="CHEBI:58702"/>
        <dbReference type="EC" id="4.1.1.31"/>
    </reaction>
</comment>
<comment type="cofactor">
    <cofactor evidence="1">
        <name>Mg(2+)</name>
        <dbReference type="ChEBI" id="CHEBI:18420"/>
    </cofactor>
</comment>
<comment type="similarity">
    <text evidence="1">Belongs to the PEPCase type 1 family.</text>
</comment>
<name>CAPP_SALG2</name>
<proteinExistence type="inferred from homology"/>